<accession>Q8TWG3</accession>
<protein>
    <recommendedName>
        <fullName evidence="2">Phosphoribosylamine--glycine ligase</fullName>
        <ecNumber evidence="2">6.3.4.13</ecNumber>
    </recommendedName>
    <alternativeName>
        <fullName evidence="2">GARS</fullName>
    </alternativeName>
    <alternativeName>
        <fullName evidence="2">Glycinamide ribonucleotide synthetase</fullName>
    </alternativeName>
    <alternativeName>
        <fullName evidence="2">Phosphoribosylglycinamide synthetase</fullName>
    </alternativeName>
</protein>
<dbReference type="EC" id="6.3.4.13" evidence="2"/>
<dbReference type="EMBL" id="AE009439">
    <property type="protein sequence ID" value="AAM02284.1"/>
    <property type="molecule type" value="Genomic_DNA"/>
</dbReference>
<dbReference type="SMR" id="Q8TWG3"/>
<dbReference type="FunCoup" id="Q8TWG3">
    <property type="interactions" value="90"/>
</dbReference>
<dbReference type="STRING" id="190192.MK1071"/>
<dbReference type="PaxDb" id="190192-MK1071"/>
<dbReference type="EnsemblBacteria" id="AAM02284">
    <property type="protein sequence ID" value="AAM02284"/>
    <property type="gene ID" value="MK1071"/>
</dbReference>
<dbReference type="KEGG" id="mka:MK1071"/>
<dbReference type="PATRIC" id="fig|190192.8.peg.1125"/>
<dbReference type="HOGENOM" id="CLU_027420_3_0_2"/>
<dbReference type="InParanoid" id="Q8TWG3"/>
<dbReference type="UniPathway" id="UPA00074">
    <property type="reaction ID" value="UER00125"/>
</dbReference>
<dbReference type="Proteomes" id="UP000001826">
    <property type="component" value="Chromosome"/>
</dbReference>
<dbReference type="GO" id="GO:0005524">
    <property type="term" value="F:ATP binding"/>
    <property type="evidence" value="ECO:0007669"/>
    <property type="project" value="UniProtKB-KW"/>
</dbReference>
<dbReference type="GO" id="GO:0046872">
    <property type="term" value="F:metal ion binding"/>
    <property type="evidence" value="ECO:0007669"/>
    <property type="project" value="UniProtKB-KW"/>
</dbReference>
<dbReference type="GO" id="GO:0004637">
    <property type="term" value="F:phosphoribosylamine-glycine ligase activity"/>
    <property type="evidence" value="ECO:0007669"/>
    <property type="project" value="UniProtKB-UniRule"/>
</dbReference>
<dbReference type="GO" id="GO:0006189">
    <property type="term" value="P:'de novo' IMP biosynthetic process"/>
    <property type="evidence" value="ECO:0007669"/>
    <property type="project" value="UniProtKB-UniRule"/>
</dbReference>
<dbReference type="GO" id="GO:0009113">
    <property type="term" value="P:purine nucleobase biosynthetic process"/>
    <property type="evidence" value="ECO:0007669"/>
    <property type="project" value="InterPro"/>
</dbReference>
<dbReference type="Gene3D" id="3.40.50.20">
    <property type="match status" value="1"/>
</dbReference>
<dbReference type="Gene3D" id="3.30.1490.20">
    <property type="entry name" value="ATP-grasp fold, A domain"/>
    <property type="match status" value="1"/>
</dbReference>
<dbReference type="Gene3D" id="3.30.470.20">
    <property type="entry name" value="ATP-grasp fold, B domain"/>
    <property type="match status" value="1"/>
</dbReference>
<dbReference type="Gene3D" id="3.90.600.10">
    <property type="entry name" value="Phosphoribosylglycinamide synthetase, C-terminal domain"/>
    <property type="match status" value="1"/>
</dbReference>
<dbReference type="HAMAP" id="MF_00138">
    <property type="entry name" value="GARS"/>
    <property type="match status" value="1"/>
</dbReference>
<dbReference type="InterPro" id="IPR011761">
    <property type="entry name" value="ATP-grasp"/>
</dbReference>
<dbReference type="InterPro" id="IPR013815">
    <property type="entry name" value="ATP_grasp_subdomain_1"/>
</dbReference>
<dbReference type="InterPro" id="IPR016185">
    <property type="entry name" value="PreATP-grasp_dom_sf"/>
</dbReference>
<dbReference type="InterPro" id="IPR020561">
    <property type="entry name" value="PRibGlycinamid_synth_ATP-grasp"/>
</dbReference>
<dbReference type="InterPro" id="IPR000115">
    <property type="entry name" value="PRibGlycinamide_synth"/>
</dbReference>
<dbReference type="InterPro" id="IPR020560">
    <property type="entry name" value="PRibGlycinamide_synth_C-dom"/>
</dbReference>
<dbReference type="InterPro" id="IPR037123">
    <property type="entry name" value="PRibGlycinamide_synth_C_sf"/>
</dbReference>
<dbReference type="InterPro" id="IPR020562">
    <property type="entry name" value="PRibGlycinamide_synth_N"/>
</dbReference>
<dbReference type="InterPro" id="IPR011054">
    <property type="entry name" value="Rudment_hybrid_motif"/>
</dbReference>
<dbReference type="NCBIfam" id="TIGR00877">
    <property type="entry name" value="purD"/>
    <property type="match status" value="1"/>
</dbReference>
<dbReference type="PANTHER" id="PTHR43472">
    <property type="entry name" value="PHOSPHORIBOSYLAMINE--GLYCINE LIGASE"/>
    <property type="match status" value="1"/>
</dbReference>
<dbReference type="PANTHER" id="PTHR43472:SF1">
    <property type="entry name" value="PHOSPHORIBOSYLAMINE--GLYCINE LIGASE, CHLOROPLASTIC"/>
    <property type="match status" value="1"/>
</dbReference>
<dbReference type="Pfam" id="PF01071">
    <property type="entry name" value="GARS_A"/>
    <property type="match status" value="1"/>
</dbReference>
<dbReference type="Pfam" id="PF02843">
    <property type="entry name" value="GARS_C"/>
    <property type="match status" value="1"/>
</dbReference>
<dbReference type="Pfam" id="PF02844">
    <property type="entry name" value="GARS_N"/>
    <property type="match status" value="1"/>
</dbReference>
<dbReference type="SMART" id="SM01209">
    <property type="entry name" value="GARS_A"/>
    <property type="match status" value="1"/>
</dbReference>
<dbReference type="SMART" id="SM01210">
    <property type="entry name" value="GARS_C"/>
    <property type="match status" value="1"/>
</dbReference>
<dbReference type="SUPFAM" id="SSF56059">
    <property type="entry name" value="Glutathione synthetase ATP-binding domain-like"/>
    <property type="match status" value="1"/>
</dbReference>
<dbReference type="SUPFAM" id="SSF52440">
    <property type="entry name" value="PreATP-grasp domain"/>
    <property type="match status" value="1"/>
</dbReference>
<dbReference type="SUPFAM" id="SSF51246">
    <property type="entry name" value="Rudiment single hybrid motif"/>
    <property type="match status" value="1"/>
</dbReference>
<dbReference type="PROSITE" id="PS50975">
    <property type="entry name" value="ATP_GRASP"/>
    <property type="match status" value="1"/>
</dbReference>
<keyword id="KW-0067">ATP-binding</keyword>
<keyword id="KW-0436">Ligase</keyword>
<keyword id="KW-0460">Magnesium</keyword>
<keyword id="KW-0464">Manganese</keyword>
<keyword id="KW-0479">Metal-binding</keyword>
<keyword id="KW-0547">Nucleotide-binding</keyword>
<keyword id="KW-0658">Purine biosynthesis</keyword>
<keyword id="KW-1185">Reference proteome</keyword>
<feature type="chain" id="PRO_0000151511" description="Phosphoribosylamine--glycine ligase">
    <location>
        <begin position="1"/>
        <end position="449"/>
    </location>
</feature>
<feature type="domain" description="ATP-grasp" evidence="2">
    <location>
        <begin position="112"/>
        <end position="325"/>
    </location>
</feature>
<feature type="binding site" evidence="2">
    <location>
        <begin position="139"/>
        <end position="202"/>
    </location>
    <ligand>
        <name>ATP</name>
        <dbReference type="ChEBI" id="CHEBI:30616"/>
    </ligand>
</feature>
<feature type="binding site" evidence="2">
    <location>
        <position position="283"/>
    </location>
    <ligand>
        <name>Mg(2+)</name>
        <dbReference type="ChEBI" id="CHEBI:18420"/>
        <label>1</label>
    </ligand>
</feature>
<feature type="binding site" evidence="2">
    <location>
        <position position="283"/>
    </location>
    <ligand>
        <name>Mn(2+)</name>
        <dbReference type="ChEBI" id="CHEBI:29035"/>
        <label>1</label>
    </ligand>
</feature>
<feature type="binding site" evidence="2">
    <location>
        <position position="295"/>
    </location>
    <ligand>
        <name>Mg(2+)</name>
        <dbReference type="ChEBI" id="CHEBI:18420"/>
        <label>1</label>
    </ligand>
</feature>
<feature type="binding site" evidence="2">
    <location>
        <position position="295"/>
    </location>
    <ligand>
        <name>Mg(2+)</name>
        <dbReference type="ChEBI" id="CHEBI:18420"/>
        <label>2</label>
    </ligand>
</feature>
<feature type="binding site" evidence="2">
    <location>
        <position position="295"/>
    </location>
    <ligand>
        <name>Mn(2+)</name>
        <dbReference type="ChEBI" id="CHEBI:29035"/>
        <label>1</label>
    </ligand>
</feature>
<feature type="binding site" evidence="2">
    <location>
        <position position="295"/>
    </location>
    <ligand>
        <name>Mn(2+)</name>
        <dbReference type="ChEBI" id="CHEBI:29035"/>
        <label>2</label>
    </ligand>
</feature>
<feature type="binding site" evidence="2">
    <location>
        <position position="297"/>
    </location>
    <ligand>
        <name>Mg(2+)</name>
        <dbReference type="ChEBI" id="CHEBI:18420"/>
        <label>2</label>
    </ligand>
</feature>
<feature type="binding site" evidence="2">
    <location>
        <position position="297"/>
    </location>
    <ligand>
        <name>Mn(2+)</name>
        <dbReference type="ChEBI" id="CHEBI:29035"/>
        <label>2</label>
    </ligand>
</feature>
<gene>
    <name evidence="2" type="primary">purD</name>
    <name type="ordered locus">MK1071</name>
</gene>
<comment type="catalytic activity">
    <reaction evidence="2">
        <text>5-phospho-beta-D-ribosylamine + glycine + ATP = N(1)-(5-phospho-beta-D-ribosyl)glycinamide + ADP + phosphate + H(+)</text>
        <dbReference type="Rhea" id="RHEA:17453"/>
        <dbReference type="ChEBI" id="CHEBI:15378"/>
        <dbReference type="ChEBI" id="CHEBI:30616"/>
        <dbReference type="ChEBI" id="CHEBI:43474"/>
        <dbReference type="ChEBI" id="CHEBI:57305"/>
        <dbReference type="ChEBI" id="CHEBI:58681"/>
        <dbReference type="ChEBI" id="CHEBI:143788"/>
        <dbReference type="ChEBI" id="CHEBI:456216"/>
        <dbReference type="EC" id="6.3.4.13"/>
    </reaction>
</comment>
<comment type="cofactor">
    <cofactor evidence="1">
        <name>Mg(2+)</name>
        <dbReference type="ChEBI" id="CHEBI:18420"/>
    </cofactor>
    <cofactor evidence="1">
        <name>Mn(2+)</name>
        <dbReference type="ChEBI" id="CHEBI:29035"/>
    </cofactor>
    <text evidence="1">Binds 2 magnesium or manganese ions per subunit.</text>
</comment>
<comment type="pathway">
    <text evidence="2">Purine metabolism; IMP biosynthesis via de novo pathway; N(1)-(5-phospho-D-ribosyl)glycinamide from 5-phospho-alpha-D-ribose 1-diphosphate: step 2/2.</text>
</comment>
<comment type="similarity">
    <text evidence="2">Belongs to the GARS family.</text>
</comment>
<proteinExistence type="inferred from homology"/>
<organism>
    <name type="scientific">Methanopyrus kandleri (strain AV19 / DSM 6324 / JCM 9639 / NBRC 100938)</name>
    <dbReference type="NCBI Taxonomy" id="190192"/>
    <lineage>
        <taxon>Archaea</taxon>
        <taxon>Methanobacteriati</taxon>
        <taxon>Methanobacteriota</taxon>
        <taxon>Methanomada group</taxon>
        <taxon>Methanopyri</taxon>
        <taxon>Methanopyrales</taxon>
        <taxon>Methanopyraceae</taxon>
        <taxon>Methanopyrus</taxon>
    </lineage>
</organism>
<reference key="1">
    <citation type="journal article" date="2002" name="Proc. Natl. Acad. Sci. U.S.A.">
        <title>The complete genome of hyperthermophile Methanopyrus kandleri AV19 and monophyly of archaeal methanogens.</title>
        <authorList>
            <person name="Slesarev A.I."/>
            <person name="Mezhevaya K.V."/>
            <person name="Makarova K.S."/>
            <person name="Polushin N.N."/>
            <person name="Shcherbinina O.V."/>
            <person name="Shakhova V.V."/>
            <person name="Belova G.I."/>
            <person name="Aravind L."/>
            <person name="Natale D.A."/>
            <person name="Rogozin I.B."/>
            <person name="Tatusov R.L."/>
            <person name="Wolf Y.I."/>
            <person name="Stetter K.O."/>
            <person name="Malykh A.G."/>
            <person name="Koonin E.V."/>
            <person name="Kozyavkin S.A."/>
        </authorList>
    </citation>
    <scope>NUCLEOTIDE SEQUENCE [LARGE SCALE GENOMIC DNA]</scope>
    <source>
        <strain>AV19 / DSM 6324 / JCM 9639 / NBRC 100938</strain>
    </source>
</reference>
<sequence length="449" mass="49275">MLKVLLVGSGAREHAIAEALCGAPDEDVELYAFMGNRNPGIIRLAEDYVVGDPTDVEAVARAAADWNVDFAVVGPEDPLAEGVADRLEEEGIPTFGPKRGPARIEWDKGFARELMEKYDIPGRPEFGIFEDPDEACDFIDELGKPVAVKPAGLTGGKGVKVVGDQLKNLDEAKEYVKEIFEEDIGGIPKVIIEEKCVGEEYTIQAYTDGEKVIPTPAVQDHPHAYEGDKGPITGGMGSYSCPDGLLPFITKEDYERSVEILERTVEAIKKETGEPYRGVLYGQFMLTAEGPVVIEFNCRYGDPEAMNILPIAEGDIVTLHASIAEGSMEGEIEFLEKATVCKYVVPEGYPESSEGEGDVIEVDEECIHRYDAVPYYASVNLDEDGKIRMTSSRALAIVGIGDELEQAEEAAESAIRECVSGERIRHRSDIGKHETVEKRVRRMKRIRGE</sequence>
<name>PUR2_METKA</name>
<evidence type="ECO:0000250" key="1"/>
<evidence type="ECO:0000255" key="2">
    <source>
        <dbReference type="HAMAP-Rule" id="MF_00138"/>
    </source>
</evidence>